<evidence type="ECO:0000255" key="1">
    <source>
        <dbReference type="HAMAP-Rule" id="MF_01316"/>
    </source>
</evidence>
<evidence type="ECO:0000305" key="2"/>
<feature type="chain" id="PRO_0000219646" description="Photosystem II reaction center protein I">
    <location>
        <begin position="1"/>
        <end position="36"/>
    </location>
</feature>
<feature type="transmembrane region" description="Helical" evidence="1">
    <location>
        <begin position="4"/>
        <end position="24"/>
    </location>
</feature>
<proteinExistence type="inferred from homology"/>
<protein>
    <recommendedName>
        <fullName evidence="1">Photosystem II reaction center protein I</fullName>
        <shortName evidence="1">PSII-I</shortName>
    </recommendedName>
    <alternativeName>
        <fullName evidence="1">PSII 4.8 kDa protein</fullName>
    </alternativeName>
</protein>
<gene>
    <name evidence="1" type="primary">psbI</name>
</gene>
<organism>
    <name type="scientific">Pinus thunbergii</name>
    <name type="common">Japanese black pine</name>
    <name type="synonym">Pinus thunbergiana</name>
    <dbReference type="NCBI Taxonomy" id="3350"/>
    <lineage>
        <taxon>Eukaryota</taxon>
        <taxon>Viridiplantae</taxon>
        <taxon>Streptophyta</taxon>
        <taxon>Embryophyta</taxon>
        <taxon>Tracheophyta</taxon>
        <taxon>Spermatophyta</taxon>
        <taxon>Pinopsida</taxon>
        <taxon>Pinidae</taxon>
        <taxon>Conifers I</taxon>
        <taxon>Pinales</taxon>
        <taxon>Pinaceae</taxon>
        <taxon>Pinus</taxon>
        <taxon>Pinus subgen. Pinus</taxon>
    </lineage>
</organism>
<dbReference type="EMBL" id="D17510">
    <property type="protein sequence ID" value="BAA04314.1"/>
    <property type="status" value="ALT_INIT"/>
    <property type="molecule type" value="Genomic_DNA"/>
</dbReference>
<dbReference type="PIR" id="T07434">
    <property type="entry name" value="T07434"/>
</dbReference>
<dbReference type="RefSeq" id="NP_042355.2">
    <property type="nucleotide sequence ID" value="NC_001631.1"/>
</dbReference>
<dbReference type="SMR" id="P41599"/>
<dbReference type="GeneID" id="809087"/>
<dbReference type="GO" id="GO:0009535">
    <property type="term" value="C:chloroplast thylakoid membrane"/>
    <property type="evidence" value="ECO:0007669"/>
    <property type="project" value="UniProtKB-SubCell"/>
</dbReference>
<dbReference type="GO" id="GO:0009539">
    <property type="term" value="C:photosystem II reaction center"/>
    <property type="evidence" value="ECO:0007669"/>
    <property type="project" value="InterPro"/>
</dbReference>
<dbReference type="GO" id="GO:0015979">
    <property type="term" value="P:photosynthesis"/>
    <property type="evidence" value="ECO:0007669"/>
    <property type="project" value="UniProtKB-UniRule"/>
</dbReference>
<dbReference type="HAMAP" id="MF_01316">
    <property type="entry name" value="PSII_PsbI"/>
    <property type="match status" value="1"/>
</dbReference>
<dbReference type="InterPro" id="IPR003686">
    <property type="entry name" value="PSII_PsbI"/>
</dbReference>
<dbReference type="InterPro" id="IPR037271">
    <property type="entry name" value="PSII_PsbI_sf"/>
</dbReference>
<dbReference type="NCBIfam" id="NF002735">
    <property type="entry name" value="PRK02655.1"/>
    <property type="match status" value="1"/>
</dbReference>
<dbReference type="PANTHER" id="PTHR35772">
    <property type="entry name" value="PHOTOSYSTEM II REACTION CENTER PROTEIN I"/>
    <property type="match status" value="1"/>
</dbReference>
<dbReference type="PANTHER" id="PTHR35772:SF1">
    <property type="entry name" value="PHOTOSYSTEM II REACTION CENTER PROTEIN I"/>
    <property type="match status" value="1"/>
</dbReference>
<dbReference type="Pfam" id="PF02532">
    <property type="entry name" value="PsbI"/>
    <property type="match status" value="1"/>
</dbReference>
<dbReference type="SUPFAM" id="SSF161041">
    <property type="entry name" value="Photosystem II reaction center protein I, PsbI"/>
    <property type="match status" value="1"/>
</dbReference>
<comment type="function">
    <text evidence="1">One of the components of the core complex of photosystem II (PSII), required for its stability and/or assembly. PSII is a light-driven water:plastoquinone oxidoreductase that uses light energy to abstract electrons from H(2)O, generating O(2) and a proton gradient subsequently used for ATP formation. It consists of a core antenna complex that captures photons, and an electron transfer chain that converts photonic excitation into a charge separation.</text>
</comment>
<comment type="subunit">
    <text evidence="1">PSII is composed of 1 copy each of membrane proteins PsbA, PsbB, PsbC, PsbD, PsbE, PsbF, PsbH, PsbI, PsbJ, PsbK, PsbL, PsbM, PsbT, PsbX, PsbY, PsbZ, Psb30/Ycf12, at least 3 peripheral proteins of the oxygen-evolving complex and a large number of cofactors. It forms dimeric complexes.</text>
</comment>
<comment type="subcellular location">
    <subcellularLocation>
        <location evidence="1">Plastid</location>
        <location evidence="1">Chloroplast thylakoid membrane</location>
        <topology evidence="1">Single-pass membrane protein</topology>
    </subcellularLocation>
</comment>
<comment type="similarity">
    <text evidence="1">Belongs to the PsbI family.</text>
</comment>
<comment type="sequence caution" evidence="2">
    <conflict type="erroneous initiation">
        <sequence resource="EMBL-CDS" id="BAA04314"/>
    </conflict>
    <text>Extended N-terminus.</text>
</comment>
<accession>P41599</accession>
<name>PSBI_PINTH</name>
<reference key="1">
    <citation type="journal article" date="1994" name="Proc. Natl. Acad. Sci. U.S.A.">
        <title>Loss of all ndh genes as determined by sequencing the entire chloroplast genome of the black pine Pinus thunbergii.</title>
        <authorList>
            <person name="Wakasugi T."/>
            <person name="Tsudzuki J."/>
            <person name="Ito S."/>
            <person name="Nakashima K."/>
            <person name="Tsudzuki T."/>
            <person name="Sugiura M."/>
        </authorList>
    </citation>
    <scope>NUCLEOTIDE SEQUENCE [LARGE SCALE GENOMIC DNA]</scope>
</reference>
<sequence length="36" mass="4137">MLTLKLFVYAVVVFFISLFIFGFLSNDPGRNPGRKE</sequence>
<keyword id="KW-0150">Chloroplast</keyword>
<keyword id="KW-0472">Membrane</keyword>
<keyword id="KW-0602">Photosynthesis</keyword>
<keyword id="KW-0604">Photosystem II</keyword>
<keyword id="KW-0934">Plastid</keyword>
<keyword id="KW-0674">Reaction center</keyword>
<keyword id="KW-0793">Thylakoid</keyword>
<keyword id="KW-0812">Transmembrane</keyword>
<keyword id="KW-1133">Transmembrane helix</keyword>
<geneLocation type="chloroplast"/>